<feature type="chain" id="PRO_1000135321" description="Fluoride-specific ion channel FluC">
    <location>
        <begin position="1"/>
        <end position="127"/>
    </location>
</feature>
<feature type="transmembrane region" description="Helical" evidence="1">
    <location>
        <begin position="4"/>
        <end position="24"/>
    </location>
</feature>
<feature type="transmembrane region" description="Helical" evidence="1">
    <location>
        <begin position="35"/>
        <end position="55"/>
    </location>
</feature>
<feature type="transmembrane region" description="Helical" evidence="1">
    <location>
        <begin position="71"/>
        <end position="91"/>
    </location>
</feature>
<feature type="transmembrane region" description="Helical" evidence="1">
    <location>
        <begin position="103"/>
        <end position="123"/>
    </location>
</feature>
<feature type="binding site" evidence="1">
    <location>
        <position position="75"/>
    </location>
    <ligand>
        <name>Na(+)</name>
        <dbReference type="ChEBI" id="CHEBI:29101"/>
        <note>structural</note>
    </ligand>
</feature>
<feature type="binding site" evidence="1">
    <location>
        <position position="78"/>
    </location>
    <ligand>
        <name>Na(+)</name>
        <dbReference type="ChEBI" id="CHEBI:29101"/>
        <note>structural</note>
    </ligand>
</feature>
<protein>
    <recommendedName>
        <fullName evidence="1">Fluoride-specific ion channel FluC</fullName>
    </recommendedName>
</protein>
<dbReference type="EMBL" id="CU928145">
    <property type="protein sequence ID" value="CAU96489.1"/>
    <property type="molecule type" value="Genomic_DNA"/>
</dbReference>
<dbReference type="RefSeq" id="WP_000939738.1">
    <property type="nucleotide sequence ID" value="NZ_CP028304.1"/>
</dbReference>
<dbReference type="SMR" id="B7L9G9"/>
<dbReference type="GeneID" id="93776858"/>
<dbReference type="KEGG" id="eck:EC55989_0617"/>
<dbReference type="HOGENOM" id="CLU_114342_3_3_6"/>
<dbReference type="Proteomes" id="UP000000746">
    <property type="component" value="Chromosome"/>
</dbReference>
<dbReference type="GO" id="GO:0005886">
    <property type="term" value="C:plasma membrane"/>
    <property type="evidence" value="ECO:0007669"/>
    <property type="project" value="UniProtKB-SubCell"/>
</dbReference>
<dbReference type="GO" id="GO:0062054">
    <property type="term" value="F:fluoride channel activity"/>
    <property type="evidence" value="ECO:0007669"/>
    <property type="project" value="UniProtKB-UniRule"/>
</dbReference>
<dbReference type="GO" id="GO:0046872">
    <property type="term" value="F:metal ion binding"/>
    <property type="evidence" value="ECO:0007669"/>
    <property type="project" value="UniProtKB-KW"/>
</dbReference>
<dbReference type="GO" id="GO:0140114">
    <property type="term" value="P:cellular detoxification of fluoride"/>
    <property type="evidence" value="ECO:0007669"/>
    <property type="project" value="UniProtKB-UniRule"/>
</dbReference>
<dbReference type="HAMAP" id="MF_00454">
    <property type="entry name" value="FluC"/>
    <property type="match status" value="1"/>
</dbReference>
<dbReference type="InterPro" id="IPR003691">
    <property type="entry name" value="FluC"/>
</dbReference>
<dbReference type="NCBIfam" id="TIGR00494">
    <property type="entry name" value="crcB"/>
    <property type="match status" value="1"/>
</dbReference>
<dbReference type="NCBIfam" id="NF010792">
    <property type="entry name" value="PRK14196.1"/>
    <property type="match status" value="1"/>
</dbReference>
<dbReference type="PANTHER" id="PTHR28259">
    <property type="entry name" value="FLUORIDE EXPORT PROTEIN 1-RELATED"/>
    <property type="match status" value="1"/>
</dbReference>
<dbReference type="PANTHER" id="PTHR28259:SF1">
    <property type="entry name" value="FLUORIDE EXPORT PROTEIN 1-RELATED"/>
    <property type="match status" value="1"/>
</dbReference>
<dbReference type="Pfam" id="PF02537">
    <property type="entry name" value="CRCB"/>
    <property type="match status" value="1"/>
</dbReference>
<name>FLUC_ECO55</name>
<sequence length="127" mass="13765">MLQLLLAVFIGGGTGSVARWLLSMRFNPLHQAIPLGTLAANLIGAFIIGMGFAWFSRMTNIDPVWKVLITTGFCGGLTTFSTFSAEVVFLLQEGRFGWALLNVFVNLLGSFAMTALAFWLFSASTAH</sequence>
<gene>
    <name evidence="1" type="primary">fluC</name>
    <name evidence="1" type="synonym">crcB</name>
    <name type="ordered locus">EC55989_0617</name>
</gene>
<proteinExistence type="inferred from homology"/>
<organism>
    <name type="scientific">Escherichia coli (strain 55989 / EAEC)</name>
    <dbReference type="NCBI Taxonomy" id="585055"/>
    <lineage>
        <taxon>Bacteria</taxon>
        <taxon>Pseudomonadati</taxon>
        <taxon>Pseudomonadota</taxon>
        <taxon>Gammaproteobacteria</taxon>
        <taxon>Enterobacterales</taxon>
        <taxon>Enterobacteriaceae</taxon>
        <taxon>Escherichia</taxon>
    </lineage>
</organism>
<keyword id="KW-0997">Cell inner membrane</keyword>
<keyword id="KW-1003">Cell membrane</keyword>
<keyword id="KW-0407">Ion channel</keyword>
<keyword id="KW-0406">Ion transport</keyword>
<keyword id="KW-0472">Membrane</keyword>
<keyword id="KW-0479">Metal-binding</keyword>
<keyword id="KW-1185">Reference proteome</keyword>
<keyword id="KW-0915">Sodium</keyword>
<keyword id="KW-0812">Transmembrane</keyword>
<keyword id="KW-1133">Transmembrane helix</keyword>
<keyword id="KW-0813">Transport</keyword>
<evidence type="ECO:0000255" key="1">
    <source>
        <dbReference type="HAMAP-Rule" id="MF_00454"/>
    </source>
</evidence>
<reference key="1">
    <citation type="journal article" date="2009" name="PLoS Genet.">
        <title>Organised genome dynamics in the Escherichia coli species results in highly diverse adaptive paths.</title>
        <authorList>
            <person name="Touchon M."/>
            <person name="Hoede C."/>
            <person name="Tenaillon O."/>
            <person name="Barbe V."/>
            <person name="Baeriswyl S."/>
            <person name="Bidet P."/>
            <person name="Bingen E."/>
            <person name="Bonacorsi S."/>
            <person name="Bouchier C."/>
            <person name="Bouvet O."/>
            <person name="Calteau A."/>
            <person name="Chiapello H."/>
            <person name="Clermont O."/>
            <person name="Cruveiller S."/>
            <person name="Danchin A."/>
            <person name="Diard M."/>
            <person name="Dossat C."/>
            <person name="Karoui M.E."/>
            <person name="Frapy E."/>
            <person name="Garry L."/>
            <person name="Ghigo J.M."/>
            <person name="Gilles A.M."/>
            <person name="Johnson J."/>
            <person name="Le Bouguenec C."/>
            <person name="Lescat M."/>
            <person name="Mangenot S."/>
            <person name="Martinez-Jehanne V."/>
            <person name="Matic I."/>
            <person name="Nassif X."/>
            <person name="Oztas S."/>
            <person name="Petit M.A."/>
            <person name="Pichon C."/>
            <person name="Rouy Z."/>
            <person name="Ruf C.S."/>
            <person name="Schneider D."/>
            <person name="Tourret J."/>
            <person name="Vacherie B."/>
            <person name="Vallenet D."/>
            <person name="Medigue C."/>
            <person name="Rocha E.P.C."/>
            <person name="Denamur E."/>
        </authorList>
    </citation>
    <scope>NUCLEOTIDE SEQUENCE [LARGE SCALE GENOMIC DNA]</scope>
    <source>
        <strain>55989 / EAEC</strain>
    </source>
</reference>
<accession>B7L9G9</accession>
<comment type="function">
    <text evidence="1">Fluoride-specific ion channel. Important for reducing fluoride concentration in the cell, thus reducing its toxicity.</text>
</comment>
<comment type="catalytic activity">
    <reaction evidence="1">
        <text>fluoride(in) = fluoride(out)</text>
        <dbReference type="Rhea" id="RHEA:76159"/>
        <dbReference type="ChEBI" id="CHEBI:17051"/>
    </reaction>
    <physiologicalReaction direction="left-to-right" evidence="1">
        <dbReference type="Rhea" id="RHEA:76160"/>
    </physiologicalReaction>
</comment>
<comment type="activity regulation">
    <text evidence="1">Na(+) is not transported, but it plays an essential structural role and its presence is essential for fluoride channel function.</text>
</comment>
<comment type="subcellular location">
    <subcellularLocation>
        <location evidence="1">Cell inner membrane</location>
        <topology evidence="1">Multi-pass membrane protein</topology>
    </subcellularLocation>
</comment>
<comment type="similarity">
    <text evidence="1">Belongs to the fluoride channel Fluc/FEX (TC 1.A.43) family.</text>
</comment>